<evidence type="ECO:0000250" key="1"/>
<evidence type="ECO:0000305" key="2"/>
<dbReference type="EMBL" id="AE017350">
    <property type="protein sequence ID" value="ALO60904.1"/>
    <property type="molecule type" value="Genomic_DNA"/>
</dbReference>
<dbReference type="SMR" id="P0CQ32"/>
<dbReference type="FunCoup" id="P0CQ32">
    <property type="interactions" value="173"/>
</dbReference>
<dbReference type="STRING" id="214684.P0CQ32"/>
<dbReference type="PaxDb" id="214684-P0CQ32"/>
<dbReference type="EnsemblFungi" id="ALO60904">
    <property type="protein sequence ID" value="ALO60904"/>
    <property type="gene ID" value="CNJ01135"/>
</dbReference>
<dbReference type="VEuPathDB" id="FungiDB:CNJ01135"/>
<dbReference type="eggNOG" id="KOG1106">
    <property type="taxonomic scope" value="Eukaryota"/>
</dbReference>
<dbReference type="InParanoid" id="P0CQ32"/>
<dbReference type="OrthoDB" id="10251744at2759"/>
<dbReference type="Proteomes" id="UP000002149">
    <property type="component" value="Chromosome 10"/>
</dbReference>
<dbReference type="GO" id="GO:0000811">
    <property type="term" value="C:GINS complex"/>
    <property type="evidence" value="ECO:0000318"/>
    <property type="project" value="GO_Central"/>
</dbReference>
<dbReference type="GO" id="GO:1902975">
    <property type="term" value="P:mitotic DNA replication initiation"/>
    <property type="evidence" value="ECO:0000318"/>
    <property type="project" value="GO_Central"/>
</dbReference>
<dbReference type="CDD" id="cd11713">
    <property type="entry name" value="GINS_A_psf3"/>
    <property type="match status" value="1"/>
</dbReference>
<dbReference type="CDD" id="cd21693">
    <property type="entry name" value="GINS_B_Psf3"/>
    <property type="match status" value="1"/>
</dbReference>
<dbReference type="Gene3D" id="1.20.58.2050">
    <property type="match status" value="1"/>
</dbReference>
<dbReference type="InterPro" id="IPR021151">
    <property type="entry name" value="GINS_A"/>
</dbReference>
<dbReference type="InterPro" id="IPR036224">
    <property type="entry name" value="GINS_bundle-like_dom_sf"/>
</dbReference>
<dbReference type="InterPro" id="IPR010492">
    <property type="entry name" value="GINS_Psf3"/>
</dbReference>
<dbReference type="InterPro" id="IPR038437">
    <property type="entry name" value="GINS_Psf3_sf"/>
</dbReference>
<dbReference type="InterPro" id="IPR055221">
    <property type="entry name" value="PSF3_N"/>
</dbReference>
<dbReference type="PANTHER" id="PTHR22768">
    <property type="entry name" value="DNA REPLICATION COMPLEX GINS PROTEIN PSF3"/>
    <property type="match status" value="1"/>
</dbReference>
<dbReference type="PANTHER" id="PTHR22768:SF0">
    <property type="entry name" value="DNA REPLICATION COMPLEX GINS PROTEIN PSF3"/>
    <property type="match status" value="1"/>
</dbReference>
<dbReference type="Pfam" id="PF22466">
    <property type="entry name" value="PSF3_N"/>
    <property type="match status" value="1"/>
</dbReference>
<dbReference type="Pfam" id="PF05916">
    <property type="entry name" value="Sld5"/>
    <property type="match status" value="1"/>
</dbReference>
<dbReference type="SUPFAM" id="SSF158573">
    <property type="entry name" value="GINS helical bundle-like"/>
    <property type="match status" value="1"/>
</dbReference>
<dbReference type="SUPFAM" id="SSF160059">
    <property type="entry name" value="PriA/YqbF domain"/>
    <property type="match status" value="1"/>
</dbReference>
<organism>
    <name type="scientific">Cryptococcus neoformans var. neoformans serotype D (strain JEC21 / ATCC MYA-565)</name>
    <name type="common">Filobasidiella neoformans</name>
    <dbReference type="NCBI Taxonomy" id="214684"/>
    <lineage>
        <taxon>Eukaryota</taxon>
        <taxon>Fungi</taxon>
        <taxon>Dikarya</taxon>
        <taxon>Basidiomycota</taxon>
        <taxon>Agaricomycotina</taxon>
        <taxon>Tremellomycetes</taxon>
        <taxon>Tremellales</taxon>
        <taxon>Cryptococcaceae</taxon>
        <taxon>Cryptococcus</taxon>
        <taxon>Cryptococcus neoformans species complex</taxon>
    </lineage>
</organism>
<sequence>MEDDYFSITSILADNHKMSCTFALDAEGLGYLEGSTENDIHEGTKVELPFWLAQTLSVNQFTTFTLPLPYSSRVQSALVASPVSVKLSNLVGGNGWWYRWGKKLADMLEDEQATNIRNMLLRAFTGRLPTLQDLAAHHASADHTMPELSTSKAEMFRDGMEGDERELFSIGQDSGRLFKAWYDRKKGSR</sequence>
<gene>
    <name type="primary">PSF3</name>
    <name type="ordered locus">CNJ01135</name>
</gene>
<accession>P0CQ32</accession>
<accession>A0A0S2LIU7</accession>
<accession>Q55KV0</accession>
<accession>Q5KAM9</accession>
<comment type="function">
    <text evidence="1">The GINS complex plays an essential role in the initiation of DNA replication.</text>
</comment>
<comment type="subunit">
    <text evidence="1">Component of the GINS complex which is a heterotetramer of SLD5, PSF1, PSF2 and PSF3.</text>
</comment>
<comment type="subcellular location">
    <subcellularLocation>
        <location evidence="1">Nucleus</location>
    </subcellularLocation>
</comment>
<comment type="similarity">
    <text evidence="2">Belongs to the GINS3/PSF3 family.</text>
</comment>
<proteinExistence type="inferred from homology"/>
<name>PSF3_CRYNJ</name>
<reference key="1">
    <citation type="journal article" date="2005" name="Science">
        <title>The genome of the basidiomycetous yeast and human pathogen Cryptococcus neoformans.</title>
        <authorList>
            <person name="Loftus B.J."/>
            <person name="Fung E."/>
            <person name="Roncaglia P."/>
            <person name="Rowley D."/>
            <person name="Amedeo P."/>
            <person name="Bruno D."/>
            <person name="Vamathevan J."/>
            <person name="Miranda M."/>
            <person name="Anderson I.J."/>
            <person name="Fraser J.A."/>
            <person name="Allen J.E."/>
            <person name="Bosdet I.E."/>
            <person name="Brent M.R."/>
            <person name="Chiu R."/>
            <person name="Doering T.L."/>
            <person name="Donlin M.J."/>
            <person name="D'Souza C.A."/>
            <person name="Fox D.S."/>
            <person name="Grinberg V."/>
            <person name="Fu J."/>
            <person name="Fukushima M."/>
            <person name="Haas B.J."/>
            <person name="Huang J.C."/>
            <person name="Janbon G."/>
            <person name="Jones S.J.M."/>
            <person name="Koo H.L."/>
            <person name="Krzywinski M.I."/>
            <person name="Kwon-Chung K.J."/>
            <person name="Lengeler K.B."/>
            <person name="Maiti R."/>
            <person name="Marra M.A."/>
            <person name="Marra R.E."/>
            <person name="Mathewson C.A."/>
            <person name="Mitchell T.G."/>
            <person name="Pertea M."/>
            <person name="Riggs F.R."/>
            <person name="Salzberg S.L."/>
            <person name="Schein J.E."/>
            <person name="Shvartsbeyn A."/>
            <person name="Shin H."/>
            <person name="Shumway M."/>
            <person name="Specht C.A."/>
            <person name="Suh B.B."/>
            <person name="Tenney A."/>
            <person name="Utterback T.R."/>
            <person name="Wickes B.L."/>
            <person name="Wortman J.R."/>
            <person name="Wye N.H."/>
            <person name="Kronstad J.W."/>
            <person name="Lodge J.K."/>
            <person name="Heitman J."/>
            <person name="Davis R.W."/>
            <person name="Fraser C.M."/>
            <person name="Hyman R.W."/>
        </authorList>
    </citation>
    <scope>NUCLEOTIDE SEQUENCE [LARGE SCALE GENOMIC DNA]</scope>
    <source>
        <strain>JEC21 / ATCC MYA-565</strain>
    </source>
</reference>
<keyword id="KW-0235">DNA replication</keyword>
<keyword id="KW-0539">Nucleus</keyword>
<keyword id="KW-1185">Reference proteome</keyword>
<feature type="chain" id="PRO_0000278420" description="DNA replication complex GINS protein PSF3">
    <location>
        <begin position="1"/>
        <end position="189"/>
    </location>
</feature>
<protein>
    <recommendedName>
        <fullName>DNA replication complex GINS protein PSF3</fullName>
    </recommendedName>
</protein>